<keyword id="KW-0029">Amino-acid transport</keyword>
<keyword id="KW-1003">Cell membrane</keyword>
<keyword id="KW-0406">Ion transport</keyword>
<keyword id="KW-0472">Membrane</keyword>
<keyword id="KW-1185">Reference proteome</keyword>
<keyword id="KW-0915">Sodium</keyword>
<keyword id="KW-0739">Sodium transport</keyword>
<keyword id="KW-0769">Symport</keyword>
<keyword id="KW-0812">Transmembrane</keyword>
<keyword id="KW-1133">Transmembrane helix</keyword>
<keyword id="KW-0813">Transport</keyword>
<evidence type="ECO:0000250" key="1">
    <source>
        <dbReference type="UniProtKB" id="P07117"/>
    </source>
</evidence>
<evidence type="ECO:0000255" key="2"/>
<evidence type="ECO:0000305" key="3"/>
<gene>
    <name type="primary">putP</name>
    <name type="ordered locus">SERP1440</name>
</gene>
<feature type="chain" id="PRO_0000364107" description="Sodium/proline symporter">
    <location>
        <begin position="1"/>
        <end position="511"/>
    </location>
</feature>
<feature type="transmembrane region" description="Helical" evidence="2">
    <location>
        <begin position="16"/>
        <end position="36"/>
    </location>
</feature>
<feature type="transmembrane region" description="Helical" evidence="2">
    <location>
        <begin position="54"/>
        <end position="74"/>
    </location>
</feature>
<feature type="transmembrane region" description="Helical" evidence="2">
    <location>
        <begin position="85"/>
        <end position="105"/>
    </location>
</feature>
<feature type="transmembrane region" description="Helical" evidence="2">
    <location>
        <begin position="139"/>
        <end position="159"/>
    </location>
</feature>
<feature type="transmembrane region" description="Helical" evidence="2">
    <location>
        <begin position="175"/>
        <end position="195"/>
    </location>
</feature>
<feature type="transmembrane region" description="Helical" evidence="2">
    <location>
        <begin position="199"/>
        <end position="219"/>
    </location>
</feature>
<feature type="transmembrane region" description="Helical" evidence="2">
    <location>
        <begin position="246"/>
        <end position="266"/>
    </location>
</feature>
<feature type="transmembrane region" description="Helical" evidence="2">
    <location>
        <begin position="284"/>
        <end position="304"/>
    </location>
</feature>
<feature type="transmembrane region" description="Helical" evidence="2">
    <location>
        <begin position="327"/>
        <end position="347"/>
    </location>
</feature>
<feature type="transmembrane region" description="Helical" evidence="2">
    <location>
        <begin position="381"/>
        <end position="401"/>
    </location>
</feature>
<feature type="transmembrane region" description="Helical" evidence="2">
    <location>
        <begin position="407"/>
        <end position="427"/>
    </location>
</feature>
<feature type="transmembrane region" description="Helical" evidence="2">
    <location>
        <begin position="438"/>
        <end position="458"/>
    </location>
</feature>
<feature type="transmembrane region" description="Helical" evidence="2">
    <location>
        <begin position="467"/>
        <end position="487"/>
    </location>
</feature>
<accession>Q5HN32</accession>
<name>PUTP_STAEQ</name>
<protein>
    <recommendedName>
        <fullName>Sodium/proline symporter</fullName>
    </recommendedName>
    <alternativeName>
        <fullName>Proline permease</fullName>
    </alternativeName>
</protein>
<organism>
    <name type="scientific">Staphylococcus epidermidis (strain ATCC 35984 / DSM 28319 / BCRC 17069 / CCUG 31568 / BM 3577 / RP62A)</name>
    <dbReference type="NCBI Taxonomy" id="176279"/>
    <lineage>
        <taxon>Bacteria</taxon>
        <taxon>Bacillati</taxon>
        <taxon>Bacillota</taxon>
        <taxon>Bacilli</taxon>
        <taxon>Bacillales</taxon>
        <taxon>Staphylococcaceae</taxon>
        <taxon>Staphylococcus</taxon>
    </lineage>
</organism>
<proteinExistence type="inferred from homology"/>
<reference key="1">
    <citation type="journal article" date="2005" name="J. Bacteriol.">
        <title>Insights on evolution of virulence and resistance from the complete genome analysis of an early methicillin-resistant Staphylococcus aureus strain and a biofilm-producing methicillin-resistant Staphylococcus epidermidis strain.</title>
        <authorList>
            <person name="Gill S.R."/>
            <person name="Fouts D.E."/>
            <person name="Archer G.L."/>
            <person name="Mongodin E.F."/>
            <person name="DeBoy R.T."/>
            <person name="Ravel J."/>
            <person name="Paulsen I.T."/>
            <person name="Kolonay J.F."/>
            <person name="Brinkac L.M."/>
            <person name="Beanan M.J."/>
            <person name="Dodson R.J."/>
            <person name="Daugherty S.C."/>
            <person name="Madupu R."/>
            <person name="Angiuoli S.V."/>
            <person name="Durkin A.S."/>
            <person name="Haft D.H."/>
            <person name="Vamathevan J.J."/>
            <person name="Khouri H."/>
            <person name="Utterback T.R."/>
            <person name="Lee C."/>
            <person name="Dimitrov G."/>
            <person name="Jiang L."/>
            <person name="Qin H."/>
            <person name="Weidman J."/>
            <person name="Tran K."/>
            <person name="Kang K.H."/>
            <person name="Hance I.R."/>
            <person name="Nelson K.E."/>
            <person name="Fraser C.M."/>
        </authorList>
    </citation>
    <scope>NUCLEOTIDE SEQUENCE [LARGE SCALE GENOMIC DNA]</scope>
    <source>
        <strain>ATCC 35984 / DSM 28319 / BCRC 17069 / CCUG 31568 / BM 3577 / RP62A</strain>
    </source>
</reference>
<comment type="function">
    <text evidence="1">Catalyzes the sodium-dependent uptake of extracellular L-proline.</text>
</comment>
<comment type="catalytic activity">
    <reaction evidence="1">
        <text>L-proline(in) + Na(+)(in) = L-proline(out) + Na(+)(out)</text>
        <dbReference type="Rhea" id="RHEA:28967"/>
        <dbReference type="ChEBI" id="CHEBI:29101"/>
        <dbReference type="ChEBI" id="CHEBI:60039"/>
    </reaction>
</comment>
<comment type="subcellular location">
    <subcellularLocation>
        <location evidence="3">Cell membrane</location>
        <topology evidence="2">Multi-pass membrane protein</topology>
    </subcellularLocation>
</comment>
<comment type="similarity">
    <text evidence="3">Belongs to the sodium:solute symporter (SSF) (TC 2.A.21) family.</text>
</comment>
<dbReference type="EMBL" id="CP000029">
    <property type="protein sequence ID" value="AAW54820.1"/>
    <property type="molecule type" value="Genomic_DNA"/>
</dbReference>
<dbReference type="RefSeq" id="WP_001830425.1">
    <property type="nucleotide sequence ID" value="NC_002976.3"/>
</dbReference>
<dbReference type="SMR" id="Q5HN32"/>
<dbReference type="STRING" id="176279.SERP1440"/>
<dbReference type="KEGG" id="ser:SERP1440"/>
<dbReference type="eggNOG" id="COG0591">
    <property type="taxonomic scope" value="Bacteria"/>
</dbReference>
<dbReference type="HOGENOM" id="CLU_018808_15_2_9"/>
<dbReference type="Proteomes" id="UP000000531">
    <property type="component" value="Chromosome"/>
</dbReference>
<dbReference type="GO" id="GO:0005886">
    <property type="term" value="C:plasma membrane"/>
    <property type="evidence" value="ECO:0007669"/>
    <property type="project" value="UniProtKB-SubCell"/>
</dbReference>
<dbReference type="GO" id="GO:0015193">
    <property type="term" value="F:L-proline transmembrane transporter activity"/>
    <property type="evidence" value="ECO:0007669"/>
    <property type="project" value="TreeGrafter"/>
</dbReference>
<dbReference type="GO" id="GO:0005298">
    <property type="term" value="F:proline:sodium symporter activity"/>
    <property type="evidence" value="ECO:0007669"/>
    <property type="project" value="InterPro"/>
</dbReference>
<dbReference type="GO" id="GO:0031402">
    <property type="term" value="F:sodium ion binding"/>
    <property type="evidence" value="ECO:0007669"/>
    <property type="project" value="InterPro"/>
</dbReference>
<dbReference type="GO" id="GO:0015824">
    <property type="term" value="P:proline transport"/>
    <property type="evidence" value="ECO:0007669"/>
    <property type="project" value="InterPro"/>
</dbReference>
<dbReference type="CDD" id="cd11475">
    <property type="entry name" value="SLC5sbd_PutP"/>
    <property type="match status" value="1"/>
</dbReference>
<dbReference type="FunFam" id="1.20.1730.10:FF:000002">
    <property type="entry name" value="Sodium/proline symporter"/>
    <property type="match status" value="1"/>
</dbReference>
<dbReference type="Gene3D" id="1.20.1730.10">
    <property type="entry name" value="Sodium/glucose cotransporter"/>
    <property type="match status" value="1"/>
</dbReference>
<dbReference type="InterPro" id="IPR038377">
    <property type="entry name" value="Na/Glc_symporter_sf"/>
</dbReference>
<dbReference type="InterPro" id="IPR011851">
    <property type="entry name" value="Na/Pro_symporter"/>
</dbReference>
<dbReference type="InterPro" id="IPR001734">
    <property type="entry name" value="Na/solute_symporter"/>
</dbReference>
<dbReference type="InterPro" id="IPR050277">
    <property type="entry name" value="Sodium:Solute_Symporter"/>
</dbReference>
<dbReference type="NCBIfam" id="TIGR02121">
    <property type="entry name" value="Na_Pro_sym"/>
    <property type="match status" value="1"/>
</dbReference>
<dbReference type="NCBIfam" id="TIGR00813">
    <property type="entry name" value="sss"/>
    <property type="match status" value="1"/>
</dbReference>
<dbReference type="PANTHER" id="PTHR48086">
    <property type="entry name" value="SODIUM/PROLINE SYMPORTER-RELATED"/>
    <property type="match status" value="1"/>
</dbReference>
<dbReference type="PANTHER" id="PTHR48086:SF3">
    <property type="entry name" value="SODIUM_PROLINE SYMPORTER"/>
    <property type="match status" value="1"/>
</dbReference>
<dbReference type="Pfam" id="PF00474">
    <property type="entry name" value="SSF"/>
    <property type="match status" value="1"/>
</dbReference>
<dbReference type="PROSITE" id="PS50283">
    <property type="entry name" value="NA_SOLUT_SYMP_3"/>
    <property type="match status" value="1"/>
</dbReference>
<sequence length="511" mass="56039">MFTLGTALSNQIDANWQTYVMIIVYFIILLIIGFYGYRQATGNLSEFMLGGRSIGPYITALSAGASDMSGWMIMGLPGSVYSTGLSAIWITIGLTLGAYINYFVVAPRLRVYTEIAGDAITLPDFFKNRLDDKKNIIKIISGLIIVVFFTLYTHSGFVSGGKLFESAFGLNYHAGLLIVAIIVIFYTFFGGYLAVSITDFFQGVIMLIAMVMVPIVALLKLNGWDTFHDIAQMKPTNLDLFRGTTVLGIVSLFSWGLGYFGQPHIIVRFMSIKSHKLLPKARRLGISWMAVGLLGAIGVGLTGISFISERHIKLEDPETLFIVMSQILFHPLVGGFLLAAILAAIMSTISSQLLVTSSSLTEDFYKLIRGSDKASSHQKEFVLIGRLSVLLVAIVAITIAWHPNDTILNLVGNAWAGFGAAFSPLVLYSLYWKDLTRAGAISGMVAGAVVVIVWISWIKPLATINAFFGMYEIIPGFIVSVLITYIVSKLTKKPDDYVIENLNKVKHVVKE</sequence>